<accession>Q9YAX2</accession>
<organism>
    <name type="scientific">Aeropyrum pernix (strain ATCC 700893 / DSM 11879 / JCM 9820 / NBRC 100138 / K1)</name>
    <dbReference type="NCBI Taxonomy" id="272557"/>
    <lineage>
        <taxon>Archaea</taxon>
        <taxon>Thermoproteota</taxon>
        <taxon>Thermoprotei</taxon>
        <taxon>Desulfurococcales</taxon>
        <taxon>Desulfurococcaceae</taxon>
        <taxon>Aeropyrum</taxon>
    </lineage>
</organism>
<keyword id="KW-0002">3D-structure</keyword>
<keyword id="KW-0158">Chromosome</keyword>
<keyword id="KW-0963">Cytoplasm</keyword>
<keyword id="KW-0226">DNA condensation</keyword>
<keyword id="KW-0238">DNA-binding</keyword>
<keyword id="KW-1185">Reference proteome</keyword>
<sequence>MACEGAPEVRIGRKPVMNYVLAILTTLMEQGTNQVVVKARGRNINRAVDAVEIVRKRFAKNIEIKDIKIDSQEIEVQTPEGQTRTRRVSSIEICLEKAGESA</sequence>
<comment type="function">
    <text evidence="2 4 5">Binds double-stranded DNA tightly but without sequence specificity (PubMed:18004791, PubMed:22334696). Involved in DNA compaction (By similarity).</text>
</comment>
<comment type="subunit">
    <text evidence="2 5">Forms homodimers and homotetramers; oligomerization is enhanced and stabilized by DNA (PubMed:22334696). Interacts with Alba 1 (By similarity).</text>
</comment>
<comment type="subcellular location">
    <subcellularLocation>
        <location evidence="1 3">Cytoplasm</location>
    </subcellularLocation>
    <subcellularLocation>
        <location evidence="1 3">Chromosome</location>
    </subcellularLocation>
</comment>
<comment type="similarity">
    <text evidence="3 8">Belongs to the histone-like Alba family.</text>
</comment>
<proteinExistence type="evidence at protein level"/>
<evidence type="ECO:0000250" key="1">
    <source>
        <dbReference type="UniProtKB" id="P60849"/>
    </source>
</evidence>
<evidence type="ECO:0000250" key="2">
    <source>
        <dbReference type="UniProtKB" id="Q97ZF4"/>
    </source>
</evidence>
<evidence type="ECO:0000255" key="3">
    <source>
        <dbReference type="HAMAP-Rule" id="MF_01122"/>
    </source>
</evidence>
<evidence type="ECO:0000269" key="4">
    <source>
    </source>
</evidence>
<evidence type="ECO:0000269" key="5">
    <source>
    </source>
</evidence>
<evidence type="ECO:0000303" key="6">
    <source>
    </source>
</evidence>
<evidence type="ECO:0000303" key="7">
    <source>
    </source>
</evidence>
<evidence type="ECO:0000305" key="8"/>
<evidence type="ECO:0007744" key="9">
    <source>
        <dbReference type="PDB" id="2H9U"/>
    </source>
</evidence>
<evidence type="ECO:0007744" key="10">
    <source>
        <dbReference type="PDB" id="3U6Y"/>
    </source>
</evidence>
<evidence type="ECO:0007829" key="11">
    <source>
        <dbReference type="PDB" id="2H9U"/>
    </source>
</evidence>
<evidence type="ECO:0007829" key="12">
    <source>
        <dbReference type="PDB" id="3U6Y"/>
    </source>
</evidence>
<reference key="1">
    <citation type="journal article" date="1999" name="DNA Res.">
        <title>Complete genome sequence of an aerobic hyper-thermophilic crenarchaeon, Aeropyrum pernix K1.</title>
        <authorList>
            <person name="Kawarabayasi Y."/>
            <person name="Hino Y."/>
            <person name="Horikawa H."/>
            <person name="Yamazaki S."/>
            <person name="Haikawa Y."/>
            <person name="Jin-no K."/>
            <person name="Takahashi M."/>
            <person name="Sekine M."/>
            <person name="Baba S."/>
            <person name="Ankai A."/>
            <person name="Kosugi H."/>
            <person name="Hosoyama A."/>
            <person name="Fukui S."/>
            <person name="Nagai Y."/>
            <person name="Nishijima K."/>
            <person name="Nakazawa H."/>
            <person name="Takamiya M."/>
            <person name="Masuda S."/>
            <person name="Funahashi T."/>
            <person name="Tanaka T."/>
            <person name="Kudoh Y."/>
            <person name="Yamazaki J."/>
            <person name="Kushida N."/>
            <person name="Oguchi A."/>
            <person name="Aoki K."/>
            <person name="Kubota K."/>
            <person name="Nakamura Y."/>
            <person name="Nomura N."/>
            <person name="Sako Y."/>
            <person name="Kikuchi H."/>
        </authorList>
    </citation>
    <scope>NUCLEOTIDE SEQUENCE [LARGE SCALE GENOMIC DNA]</scope>
    <source>
        <strain>ATCC 700893 / DSM 11879 / JCM 9820 / NBRC 100138 / K1</strain>
    </source>
</reference>
<reference evidence="9" key="2">
    <citation type="journal article" date="2008" name="Proteins">
        <title>Crystal structure of an archaeal specific DNA-binding protein (Ape10b2) from Aeropyrum pernix K1.</title>
        <authorList>
            <person name="Kumarevel T."/>
            <person name="Sakamoto K."/>
            <person name="Gopinath S.C."/>
            <person name="Shinkai A."/>
            <person name="Kumar P.K."/>
            <person name="Yokoyama S."/>
        </authorList>
    </citation>
    <scope>X-RAY CRYSTALLOGRAPHY (2.0 ANGSTROMS)</scope>
    <scope>FUNCTION</scope>
</reference>
<reference evidence="10" key="3">
    <citation type="journal article" date="2012" name="J. Biol. Chem.">
        <title>Crystal structure of archaeal chromatin protein Alba2-double-stranded DNA complex from Aeropyrum pernix K1.</title>
        <authorList>
            <person name="Tanaka T."/>
            <person name="Padavattan S."/>
            <person name="Kumarevel T."/>
        </authorList>
    </citation>
    <scope>X-RAY CRYSTALLOGRAPHY (2.0 ANGSTROMS)</scope>
    <scope>FUNCTION</scope>
    <scope>SUBUNIT</scope>
    <scope>MUTAGENESIS OF ARG-10; ARG-13; ARG-40; ARG-42; ASN-43; ARG-46 AND ARG-86</scope>
</reference>
<dbReference type="EMBL" id="BA000002">
    <property type="protein sequence ID" value="BAA80826.1"/>
    <property type="molecule type" value="Genomic_DNA"/>
</dbReference>
<dbReference type="PIR" id="E72567">
    <property type="entry name" value="E72567"/>
</dbReference>
<dbReference type="RefSeq" id="WP_010866616.1">
    <property type="nucleotide sequence ID" value="NC_000854.2"/>
</dbReference>
<dbReference type="PDB" id="2H9U">
    <property type="method" value="X-ray"/>
    <property type="resolution" value="2.00 A"/>
    <property type="chains" value="A=1-102"/>
</dbReference>
<dbReference type="PDB" id="3U6Y">
    <property type="method" value="X-ray"/>
    <property type="resolution" value="2.00 A"/>
    <property type="chains" value="A/C=1-102"/>
</dbReference>
<dbReference type="PDBsum" id="2H9U"/>
<dbReference type="PDBsum" id="3U6Y"/>
<dbReference type="SMR" id="Q9YAX2"/>
<dbReference type="STRING" id="272557.APE_1823"/>
<dbReference type="EnsemblBacteria" id="BAA80826">
    <property type="protein sequence ID" value="BAA80826"/>
    <property type="gene ID" value="APE_1823"/>
</dbReference>
<dbReference type="GeneID" id="1446264"/>
<dbReference type="KEGG" id="ape:APE_1823"/>
<dbReference type="eggNOG" id="arCOG01753">
    <property type="taxonomic scope" value="Archaea"/>
</dbReference>
<dbReference type="EvolutionaryTrace" id="Q9YAX2"/>
<dbReference type="Proteomes" id="UP000002518">
    <property type="component" value="Chromosome"/>
</dbReference>
<dbReference type="GO" id="GO:0005694">
    <property type="term" value="C:chromosome"/>
    <property type="evidence" value="ECO:0007669"/>
    <property type="project" value="UniProtKB-SubCell"/>
</dbReference>
<dbReference type="GO" id="GO:0005737">
    <property type="term" value="C:cytoplasm"/>
    <property type="evidence" value="ECO:0007669"/>
    <property type="project" value="UniProtKB-SubCell"/>
</dbReference>
<dbReference type="GO" id="GO:0003690">
    <property type="term" value="F:double-stranded DNA binding"/>
    <property type="evidence" value="ECO:0007669"/>
    <property type="project" value="UniProtKB-UniRule"/>
</dbReference>
<dbReference type="GO" id="GO:0003723">
    <property type="term" value="F:RNA binding"/>
    <property type="evidence" value="ECO:0007669"/>
    <property type="project" value="InterPro"/>
</dbReference>
<dbReference type="GO" id="GO:0030261">
    <property type="term" value="P:chromosome condensation"/>
    <property type="evidence" value="ECO:0007669"/>
    <property type="project" value="UniProtKB-KW"/>
</dbReference>
<dbReference type="Gene3D" id="3.30.110.20">
    <property type="entry name" value="Alba-like domain"/>
    <property type="match status" value="1"/>
</dbReference>
<dbReference type="HAMAP" id="MF_01122">
    <property type="entry name" value="AlbA"/>
    <property type="match status" value="1"/>
</dbReference>
<dbReference type="InterPro" id="IPR036882">
    <property type="entry name" value="Alba-like_dom_sf"/>
</dbReference>
<dbReference type="InterPro" id="IPR013795">
    <property type="entry name" value="DNA/RNA-bd_Alba"/>
</dbReference>
<dbReference type="InterPro" id="IPR002775">
    <property type="entry name" value="DNA/RNA-bd_Alba-like"/>
</dbReference>
<dbReference type="NCBIfam" id="TIGR00285">
    <property type="entry name" value="DNA-binding protein Alba"/>
    <property type="match status" value="1"/>
</dbReference>
<dbReference type="NCBIfam" id="NF003088">
    <property type="entry name" value="PRK04015.1"/>
    <property type="match status" value="1"/>
</dbReference>
<dbReference type="Pfam" id="PF01918">
    <property type="entry name" value="Alba"/>
    <property type="match status" value="1"/>
</dbReference>
<dbReference type="PIRSF" id="PIRSF028732">
    <property type="entry name" value="Alba"/>
    <property type="match status" value="1"/>
</dbReference>
<dbReference type="SUPFAM" id="SSF82704">
    <property type="entry name" value="AlbA-like"/>
    <property type="match status" value="1"/>
</dbReference>
<protein>
    <recommendedName>
        <fullName evidence="3">DNA/RNA-binding protein Alba 2</fullName>
    </recommendedName>
</protein>
<name>ALBA2_AERPE</name>
<gene>
    <name evidence="3" type="primary">albA2</name>
    <name evidence="6 7" type="synonym">ape10b2</name>
    <name type="ordered locus">APE_1823</name>
</gene>
<feature type="chain" id="PRO_0000151695" description="DNA/RNA-binding protein Alba 2">
    <location>
        <begin position="1"/>
        <end position="102"/>
    </location>
</feature>
<feature type="binding site" evidence="5 10">
    <location>
        <position position="10"/>
    </location>
    <ligand>
        <name>DNA</name>
        <dbReference type="ChEBI" id="CHEBI:16991"/>
    </ligand>
</feature>
<feature type="binding site" evidence="5 10">
    <location>
        <position position="13"/>
    </location>
    <ligand>
        <name>DNA</name>
        <dbReference type="ChEBI" id="CHEBI:16991"/>
    </ligand>
</feature>
<feature type="binding site" evidence="5 10">
    <location>
        <position position="40"/>
    </location>
    <ligand>
        <name>DNA</name>
        <dbReference type="ChEBI" id="CHEBI:16991"/>
    </ligand>
</feature>
<feature type="binding site" evidence="5 10">
    <location>
        <position position="42"/>
    </location>
    <ligand>
        <name>DNA</name>
        <dbReference type="ChEBI" id="CHEBI:16991"/>
    </ligand>
</feature>
<feature type="binding site" evidence="5 10">
    <location>
        <position position="43"/>
    </location>
    <ligand>
        <name>DNA</name>
        <dbReference type="ChEBI" id="CHEBI:16991"/>
    </ligand>
</feature>
<feature type="binding site" evidence="5 10">
    <location>
        <position position="46"/>
    </location>
    <ligand>
        <name>DNA</name>
        <dbReference type="ChEBI" id="CHEBI:16991"/>
    </ligand>
</feature>
<feature type="binding site" evidence="5 10">
    <location>
        <position position="86"/>
    </location>
    <ligand>
        <name>DNA</name>
        <dbReference type="ChEBI" id="CHEBI:16991"/>
    </ligand>
</feature>
<feature type="mutagenesis site" description="No significant effect on DNA binding." evidence="5">
    <original>R</original>
    <variation>A</variation>
    <location>
        <position position="10"/>
    </location>
</feature>
<feature type="mutagenesis site" description="Decreases DNA-binding." evidence="5">
    <original>R</original>
    <variation>A</variation>
    <location>
        <position position="13"/>
    </location>
</feature>
<feature type="mutagenesis site" description="Decreases DNA-binding." evidence="5">
    <original>R</original>
    <variation>A</variation>
    <location>
        <position position="40"/>
    </location>
</feature>
<feature type="mutagenesis site" description="Decreases DNA-binding." evidence="5">
    <original>R</original>
    <variation>A</variation>
    <location>
        <position position="42"/>
    </location>
</feature>
<feature type="mutagenesis site" description="Decreases DNA-binding." evidence="5">
    <original>N</original>
    <variation>A</variation>
    <location>
        <position position="43"/>
    </location>
</feature>
<feature type="mutagenesis site" description="No significant effect on DNA binding." evidence="5">
    <original>R</original>
    <variation>A</variation>
    <location>
        <position position="46"/>
    </location>
</feature>
<feature type="mutagenesis site" description="Moderately decreases DNA-binding." evidence="5">
    <original>R</original>
    <variation>A</variation>
    <location>
        <position position="86"/>
    </location>
</feature>
<feature type="strand" evidence="11">
    <location>
        <begin position="8"/>
        <end position="10"/>
    </location>
</feature>
<feature type="helix" evidence="11">
    <location>
        <begin position="16"/>
        <end position="27"/>
    </location>
</feature>
<feature type="strand" evidence="11">
    <location>
        <begin position="34"/>
        <end position="40"/>
    </location>
</feature>
<feature type="helix" evidence="11">
    <location>
        <begin position="43"/>
        <end position="57"/>
    </location>
</feature>
<feature type="turn" evidence="11">
    <location>
        <begin position="58"/>
        <end position="61"/>
    </location>
</feature>
<feature type="strand" evidence="11">
    <location>
        <begin position="62"/>
        <end position="77"/>
    </location>
</feature>
<feature type="strand" evidence="12">
    <location>
        <begin position="79"/>
        <end position="81"/>
    </location>
</feature>
<feature type="strand" evidence="11">
    <location>
        <begin position="83"/>
        <end position="97"/>
    </location>
</feature>